<feature type="chain" id="PRO_1000052257" description="Large ribosomal subunit protein uL24">
    <location>
        <begin position="1"/>
        <end position="105"/>
    </location>
</feature>
<proteinExistence type="inferred from homology"/>
<keyword id="KW-0687">Ribonucleoprotein</keyword>
<keyword id="KW-0689">Ribosomal protein</keyword>
<keyword id="KW-0694">RNA-binding</keyword>
<keyword id="KW-0699">rRNA-binding</keyword>
<reference key="1">
    <citation type="submission" date="2006-10" db="EMBL/GenBank/DDBJ databases">
        <authorList>
            <person name="Fleischmann R.D."/>
            <person name="Dodson R.J."/>
            <person name="Haft D.H."/>
            <person name="Merkel J.S."/>
            <person name="Nelson W.C."/>
            <person name="Fraser C.M."/>
        </authorList>
    </citation>
    <scope>NUCLEOTIDE SEQUENCE [LARGE SCALE GENOMIC DNA]</scope>
    <source>
        <strain>104</strain>
    </source>
</reference>
<sequence length="105" mass="11448">MKVRKGDTVLVIAGKDKGAKGKVLKAYPDRERVLVEGVNRIKKHTAISTNQRGAQSGGIVTQEAPIHVSNVMVVDSDGKPARVGYRLDEETGKRVRISKRNGKDI</sequence>
<protein>
    <recommendedName>
        <fullName evidence="1">Large ribosomal subunit protein uL24</fullName>
    </recommendedName>
    <alternativeName>
        <fullName evidence="2">50S ribosomal protein L24</fullName>
    </alternativeName>
</protein>
<accession>A0QL01</accession>
<gene>
    <name evidence="1" type="primary">rplX</name>
    <name type="ordered locus">MAV_4454</name>
</gene>
<organism>
    <name type="scientific">Mycobacterium avium (strain 104)</name>
    <dbReference type="NCBI Taxonomy" id="243243"/>
    <lineage>
        <taxon>Bacteria</taxon>
        <taxon>Bacillati</taxon>
        <taxon>Actinomycetota</taxon>
        <taxon>Actinomycetes</taxon>
        <taxon>Mycobacteriales</taxon>
        <taxon>Mycobacteriaceae</taxon>
        <taxon>Mycobacterium</taxon>
        <taxon>Mycobacterium avium complex (MAC)</taxon>
    </lineage>
</organism>
<evidence type="ECO:0000255" key="1">
    <source>
        <dbReference type="HAMAP-Rule" id="MF_01326"/>
    </source>
</evidence>
<evidence type="ECO:0000305" key="2"/>
<dbReference type="EMBL" id="CP000479">
    <property type="protein sequence ID" value="ABK68024.1"/>
    <property type="molecule type" value="Genomic_DNA"/>
</dbReference>
<dbReference type="RefSeq" id="WP_003873501.1">
    <property type="nucleotide sequence ID" value="NC_008595.1"/>
</dbReference>
<dbReference type="SMR" id="A0QL01"/>
<dbReference type="GeneID" id="75271968"/>
<dbReference type="KEGG" id="mav:MAV_4454"/>
<dbReference type="HOGENOM" id="CLU_093315_2_0_11"/>
<dbReference type="Proteomes" id="UP000001574">
    <property type="component" value="Chromosome"/>
</dbReference>
<dbReference type="GO" id="GO:1990904">
    <property type="term" value="C:ribonucleoprotein complex"/>
    <property type="evidence" value="ECO:0007669"/>
    <property type="project" value="UniProtKB-KW"/>
</dbReference>
<dbReference type="GO" id="GO:0005840">
    <property type="term" value="C:ribosome"/>
    <property type="evidence" value="ECO:0007669"/>
    <property type="project" value="UniProtKB-KW"/>
</dbReference>
<dbReference type="GO" id="GO:0019843">
    <property type="term" value="F:rRNA binding"/>
    <property type="evidence" value="ECO:0007669"/>
    <property type="project" value="UniProtKB-UniRule"/>
</dbReference>
<dbReference type="GO" id="GO:0003735">
    <property type="term" value="F:structural constituent of ribosome"/>
    <property type="evidence" value="ECO:0007669"/>
    <property type="project" value="InterPro"/>
</dbReference>
<dbReference type="GO" id="GO:0006412">
    <property type="term" value="P:translation"/>
    <property type="evidence" value="ECO:0007669"/>
    <property type="project" value="UniProtKB-UniRule"/>
</dbReference>
<dbReference type="CDD" id="cd06089">
    <property type="entry name" value="KOW_RPL26"/>
    <property type="match status" value="1"/>
</dbReference>
<dbReference type="FunFam" id="2.30.30.30:FF:000004">
    <property type="entry name" value="50S ribosomal protein L24"/>
    <property type="match status" value="1"/>
</dbReference>
<dbReference type="Gene3D" id="2.30.30.30">
    <property type="match status" value="1"/>
</dbReference>
<dbReference type="HAMAP" id="MF_01326_B">
    <property type="entry name" value="Ribosomal_uL24_B"/>
    <property type="match status" value="1"/>
</dbReference>
<dbReference type="InterPro" id="IPR005824">
    <property type="entry name" value="KOW"/>
</dbReference>
<dbReference type="InterPro" id="IPR014722">
    <property type="entry name" value="Rib_uL2_dom2"/>
</dbReference>
<dbReference type="InterPro" id="IPR003256">
    <property type="entry name" value="Ribosomal_uL24"/>
</dbReference>
<dbReference type="InterPro" id="IPR005825">
    <property type="entry name" value="Ribosomal_uL24_CS"/>
</dbReference>
<dbReference type="InterPro" id="IPR041988">
    <property type="entry name" value="Ribosomal_uL24_KOW"/>
</dbReference>
<dbReference type="InterPro" id="IPR008991">
    <property type="entry name" value="Translation_prot_SH3-like_sf"/>
</dbReference>
<dbReference type="NCBIfam" id="TIGR01079">
    <property type="entry name" value="rplX_bact"/>
    <property type="match status" value="1"/>
</dbReference>
<dbReference type="PANTHER" id="PTHR12903">
    <property type="entry name" value="MITOCHONDRIAL RIBOSOMAL PROTEIN L24"/>
    <property type="match status" value="1"/>
</dbReference>
<dbReference type="Pfam" id="PF00467">
    <property type="entry name" value="KOW"/>
    <property type="match status" value="1"/>
</dbReference>
<dbReference type="Pfam" id="PF17136">
    <property type="entry name" value="ribosomal_L24"/>
    <property type="match status" value="1"/>
</dbReference>
<dbReference type="SMART" id="SM00739">
    <property type="entry name" value="KOW"/>
    <property type="match status" value="1"/>
</dbReference>
<dbReference type="SUPFAM" id="SSF50104">
    <property type="entry name" value="Translation proteins SH3-like domain"/>
    <property type="match status" value="1"/>
</dbReference>
<dbReference type="PROSITE" id="PS01108">
    <property type="entry name" value="RIBOSOMAL_L24"/>
    <property type="match status" value="1"/>
</dbReference>
<comment type="function">
    <text evidence="1">One of two assembly initiator proteins, it binds directly to the 5'-end of the 23S rRNA, where it nucleates assembly of the 50S subunit.</text>
</comment>
<comment type="function">
    <text evidence="1">One of the proteins that surrounds the polypeptide exit tunnel on the outside of the subunit.</text>
</comment>
<comment type="subunit">
    <text evidence="1">Part of the 50S ribosomal subunit.</text>
</comment>
<comment type="similarity">
    <text evidence="1">Belongs to the universal ribosomal protein uL24 family.</text>
</comment>
<name>RL24_MYCA1</name>